<feature type="chain" id="PRO_1000092758" description="ATP phosphoribosyltransferase">
    <location>
        <begin position="1"/>
        <end position="298"/>
    </location>
</feature>
<evidence type="ECO:0000255" key="1">
    <source>
        <dbReference type="HAMAP-Rule" id="MF_00079"/>
    </source>
</evidence>
<gene>
    <name evidence="1" type="primary">hisG</name>
    <name type="ordered locus">VFMJ11_1095</name>
</gene>
<sequence length="298" mass="32784">MSSQRLRIAIQKKGRLSKECQELFKRCGMKFNISGERLVVHSENMPIDLLLVRDDDIPSLIMDGVVDLGVIGENELEEVRLERKALGEPSSFTTLRRLDFGGCRLSIAIDKDEVYNGPQDLAGKRIATTYPQLLKSFMDEQGIPFSTCILNGSVEVAPRAGLADAIADLVSTGATLEANGLKEAEVIFRSKATLIQREGEFDADKAALINKLLTRMQGCIQAKESKYIMLHAPTDKLDAIKDLLPGAEDPTVLPLSRDGAKVAVHLVSTENLFWETMEQLKALGASSILVLPIEKMME</sequence>
<accession>B5FD98</accession>
<comment type="function">
    <text evidence="1">Catalyzes the condensation of ATP and 5-phosphoribose 1-diphosphate to form N'-(5'-phosphoribosyl)-ATP (PR-ATP). Has a crucial role in the pathway because the rate of histidine biosynthesis seems to be controlled primarily by regulation of HisG enzymatic activity.</text>
</comment>
<comment type="catalytic activity">
    <reaction evidence="1">
        <text>1-(5-phospho-beta-D-ribosyl)-ATP + diphosphate = 5-phospho-alpha-D-ribose 1-diphosphate + ATP</text>
        <dbReference type="Rhea" id="RHEA:18473"/>
        <dbReference type="ChEBI" id="CHEBI:30616"/>
        <dbReference type="ChEBI" id="CHEBI:33019"/>
        <dbReference type="ChEBI" id="CHEBI:58017"/>
        <dbReference type="ChEBI" id="CHEBI:73183"/>
        <dbReference type="EC" id="2.4.2.17"/>
    </reaction>
</comment>
<comment type="cofactor">
    <cofactor evidence="1">
        <name>Mg(2+)</name>
        <dbReference type="ChEBI" id="CHEBI:18420"/>
    </cofactor>
</comment>
<comment type="activity regulation">
    <text evidence="1">Feedback inhibited by histidine.</text>
</comment>
<comment type="pathway">
    <text evidence="1">Amino-acid biosynthesis; L-histidine biosynthesis; L-histidine from 5-phospho-alpha-D-ribose 1-diphosphate: step 1/9.</text>
</comment>
<comment type="subcellular location">
    <subcellularLocation>
        <location evidence="1">Cytoplasm</location>
    </subcellularLocation>
</comment>
<comment type="similarity">
    <text evidence="1">Belongs to the ATP phosphoribosyltransferase family. Long subfamily.</text>
</comment>
<reference key="1">
    <citation type="submission" date="2008-08" db="EMBL/GenBank/DDBJ databases">
        <title>Complete sequence of Vibrio fischeri strain MJ11.</title>
        <authorList>
            <person name="Mandel M.J."/>
            <person name="Stabb E.V."/>
            <person name="Ruby E.G."/>
            <person name="Ferriera S."/>
            <person name="Johnson J."/>
            <person name="Kravitz S."/>
            <person name="Beeson K."/>
            <person name="Sutton G."/>
            <person name="Rogers Y.-H."/>
            <person name="Friedman R."/>
            <person name="Frazier M."/>
            <person name="Venter J.C."/>
        </authorList>
    </citation>
    <scope>NUCLEOTIDE SEQUENCE [LARGE SCALE GENOMIC DNA]</scope>
    <source>
        <strain>MJ11</strain>
    </source>
</reference>
<name>HIS1_ALIFM</name>
<proteinExistence type="inferred from homology"/>
<protein>
    <recommendedName>
        <fullName evidence="1">ATP phosphoribosyltransferase</fullName>
        <shortName evidence="1">ATP-PRT</shortName>
        <shortName evidence="1">ATP-PRTase</shortName>
        <ecNumber evidence="1">2.4.2.17</ecNumber>
    </recommendedName>
</protein>
<organism>
    <name type="scientific">Aliivibrio fischeri (strain MJ11)</name>
    <name type="common">Vibrio fischeri</name>
    <dbReference type="NCBI Taxonomy" id="388396"/>
    <lineage>
        <taxon>Bacteria</taxon>
        <taxon>Pseudomonadati</taxon>
        <taxon>Pseudomonadota</taxon>
        <taxon>Gammaproteobacteria</taxon>
        <taxon>Vibrionales</taxon>
        <taxon>Vibrionaceae</taxon>
        <taxon>Aliivibrio</taxon>
    </lineage>
</organism>
<dbReference type="EC" id="2.4.2.17" evidence="1"/>
<dbReference type="EMBL" id="CP001139">
    <property type="protein sequence ID" value="ACH65706.1"/>
    <property type="molecule type" value="Genomic_DNA"/>
</dbReference>
<dbReference type="RefSeq" id="WP_012533232.1">
    <property type="nucleotide sequence ID" value="NC_011184.1"/>
</dbReference>
<dbReference type="SMR" id="B5FD98"/>
<dbReference type="KEGG" id="vfm:VFMJ11_1095"/>
<dbReference type="HOGENOM" id="CLU_038115_1_0_6"/>
<dbReference type="UniPathway" id="UPA00031">
    <property type="reaction ID" value="UER00006"/>
</dbReference>
<dbReference type="Proteomes" id="UP000001857">
    <property type="component" value="Chromosome I"/>
</dbReference>
<dbReference type="GO" id="GO:0005737">
    <property type="term" value="C:cytoplasm"/>
    <property type="evidence" value="ECO:0007669"/>
    <property type="project" value="UniProtKB-SubCell"/>
</dbReference>
<dbReference type="GO" id="GO:0005524">
    <property type="term" value="F:ATP binding"/>
    <property type="evidence" value="ECO:0007669"/>
    <property type="project" value="UniProtKB-KW"/>
</dbReference>
<dbReference type="GO" id="GO:0003879">
    <property type="term" value="F:ATP phosphoribosyltransferase activity"/>
    <property type="evidence" value="ECO:0007669"/>
    <property type="project" value="UniProtKB-UniRule"/>
</dbReference>
<dbReference type="GO" id="GO:0000287">
    <property type="term" value="F:magnesium ion binding"/>
    <property type="evidence" value="ECO:0007669"/>
    <property type="project" value="UniProtKB-UniRule"/>
</dbReference>
<dbReference type="GO" id="GO:0000105">
    <property type="term" value="P:L-histidine biosynthetic process"/>
    <property type="evidence" value="ECO:0007669"/>
    <property type="project" value="UniProtKB-UniRule"/>
</dbReference>
<dbReference type="FunFam" id="3.30.70.120:FF:000002">
    <property type="entry name" value="ATP phosphoribosyltransferase"/>
    <property type="match status" value="1"/>
</dbReference>
<dbReference type="FunFam" id="3.40.190.10:FF:000008">
    <property type="entry name" value="ATP phosphoribosyltransferase"/>
    <property type="match status" value="1"/>
</dbReference>
<dbReference type="Gene3D" id="3.30.70.120">
    <property type="match status" value="1"/>
</dbReference>
<dbReference type="Gene3D" id="3.40.190.10">
    <property type="entry name" value="Periplasmic binding protein-like II"/>
    <property type="match status" value="2"/>
</dbReference>
<dbReference type="HAMAP" id="MF_00079">
    <property type="entry name" value="HisG_Long"/>
    <property type="match status" value="1"/>
</dbReference>
<dbReference type="InterPro" id="IPR020621">
    <property type="entry name" value="ATP-PRT_HisG_long"/>
</dbReference>
<dbReference type="InterPro" id="IPR013820">
    <property type="entry name" value="ATP_PRibTrfase_cat"/>
</dbReference>
<dbReference type="InterPro" id="IPR018198">
    <property type="entry name" value="ATP_PRibTrfase_CS"/>
</dbReference>
<dbReference type="InterPro" id="IPR001348">
    <property type="entry name" value="ATP_PRibTrfase_HisG"/>
</dbReference>
<dbReference type="InterPro" id="IPR013115">
    <property type="entry name" value="HisG_C"/>
</dbReference>
<dbReference type="InterPro" id="IPR011322">
    <property type="entry name" value="N-reg_PII-like_a/b"/>
</dbReference>
<dbReference type="InterPro" id="IPR015867">
    <property type="entry name" value="N-reg_PII/ATP_PRibTrfase_C"/>
</dbReference>
<dbReference type="NCBIfam" id="TIGR00070">
    <property type="entry name" value="hisG"/>
    <property type="match status" value="1"/>
</dbReference>
<dbReference type="NCBIfam" id="TIGR03455">
    <property type="entry name" value="HisG_C-term"/>
    <property type="match status" value="1"/>
</dbReference>
<dbReference type="PANTHER" id="PTHR21403:SF8">
    <property type="entry name" value="ATP PHOSPHORIBOSYLTRANSFERASE"/>
    <property type="match status" value="1"/>
</dbReference>
<dbReference type="PANTHER" id="PTHR21403">
    <property type="entry name" value="ATP PHOSPHORIBOSYLTRANSFERASE ATP-PRTASE"/>
    <property type="match status" value="1"/>
</dbReference>
<dbReference type="Pfam" id="PF01634">
    <property type="entry name" value="HisG"/>
    <property type="match status" value="1"/>
</dbReference>
<dbReference type="Pfam" id="PF08029">
    <property type="entry name" value="HisG_C"/>
    <property type="match status" value="1"/>
</dbReference>
<dbReference type="SUPFAM" id="SSF54913">
    <property type="entry name" value="GlnB-like"/>
    <property type="match status" value="1"/>
</dbReference>
<dbReference type="SUPFAM" id="SSF53850">
    <property type="entry name" value="Periplasmic binding protein-like II"/>
    <property type="match status" value="1"/>
</dbReference>
<dbReference type="PROSITE" id="PS01316">
    <property type="entry name" value="ATP_P_PHORIBOSYLTR"/>
    <property type="match status" value="1"/>
</dbReference>
<keyword id="KW-0028">Amino-acid biosynthesis</keyword>
<keyword id="KW-0067">ATP-binding</keyword>
<keyword id="KW-0963">Cytoplasm</keyword>
<keyword id="KW-0328">Glycosyltransferase</keyword>
<keyword id="KW-0368">Histidine biosynthesis</keyword>
<keyword id="KW-0460">Magnesium</keyword>
<keyword id="KW-0479">Metal-binding</keyword>
<keyword id="KW-0547">Nucleotide-binding</keyword>
<keyword id="KW-0808">Transferase</keyword>